<organism>
    <name type="scientific">Schizosaccharomyces pombe (strain 972 / ATCC 24843)</name>
    <name type="common">Fission yeast</name>
    <dbReference type="NCBI Taxonomy" id="284812"/>
    <lineage>
        <taxon>Eukaryota</taxon>
        <taxon>Fungi</taxon>
        <taxon>Dikarya</taxon>
        <taxon>Ascomycota</taxon>
        <taxon>Taphrinomycotina</taxon>
        <taxon>Schizosaccharomycetes</taxon>
        <taxon>Schizosaccharomycetales</taxon>
        <taxon>Schizosaccharomycetaceae</taxon>
        <taxon>Schizosaccharomyces</taxon>
    </lineage>
</organism>
<dbReference type="EMBL" id="CU329671">
    <property type="protein sequence ID" value="CAA21906.1"/>
    <property type="molecule type" value="Genomic_DNA"/>
</dbReference>
<dbReference type="PIR" id="T39666">
    <property type="entry name" value="T39666"/>
</dbReference>
<dbReference type="SMR" id="O94560"/>
<dbReference type="BioGRID" id="276514">
    <property type="interactions" value="120"/>
</dbReference>
<dbReference type="FunCoup" id="O94560">
    <property type="interactions" value="149"/>
</dbReference>
<dbReference type="STRING" id="284812.O94560"/>
<dbReference type="iPTMnet" id="O94560"/>
<dbReference type="PaxDb" id="4896-SPBC1773.01.1"/>
<dbReference type="EnsemblFungi" id="SPBC1773.01.1">
    <property type="protein sequence ID" value="SPBC1773.01.1:pep"/>
    <property type="gene ID" value="SPBC1773.01"/>
</dbReference>
<dbReference type="KEGG" id="spo:2539970"/>
<dbReference type="PomBase" id="SPBC1773.01"/>
<dbReference type="VEuPathDB" id="FungiDB:SPBC1773.01"/>
<dbReference type="eggNOG" id="KOG0642">
    <property type="taxonomic scope" value="Eukaryota"/>
</dbReference>
<dbReference type="HOGENOM" id="CLU_447007_0_0_1"/>
<dbReference type="InParanoid" id="O94560"/>
<dbReference type="OMA" id="SKCSQEV"/>
<dbReference type="PhylomeDB" id="O94560"/>
<dbReference type="PRO" id="PR:O94560"/>
<dbReference type="Proteomes" id="UP000002485">
    <property type="component" value="Chromosome II"/>
</dbReference>
<dbReference type="GO" id="GO:0005737">
    <property type="term" value="C:cytoplasm"/>
    <property type="evidence" value="ECO:0007005"/>
    <property type="project" value="PomBase"/>
</dbReference>
<dbReference type="GO" id="GO:0090443">
    <property type="term" value="C:FAR/SIN/STRIPAK complex"/>
    <property type="evidence" value="ECO:0000314"/>
    <property type="project" value="PomBase"/>
</dbReference>
<dbReference type="GO" id="GO:0044732">
    <property type="term" value="C:mitotic spindle pole body"/>
    <property type="evidence" value="ECO:0000269"/>
    <property type="project" value="PomBase"/>
</dbReference>
<dbReference type="GO" id="GO:0005635">
    <property type="term" value="C:nuclear envelope"/>
    <property type="evidence" value="ECO:0000314"/>
    <property type="project" value="PomBase"/>
</dbReference>
<dbReference type="GO" id="GO:0071957">
    <property type="term" value="C:old mitotic spindle pole body"/>
    <property type="evidence" value="ECO:0000314"/>
    <property type="project" value="PomBase"/>
</dbReference>
<dbReference type="GO" id="GO:0061509">
    <property type="term" value="P:asymmetric protein localization to old mitotic spindle pole body"/>
    <property type="evidence" value="ECO:0000315"/>
    <property type="project" value="PomBase"/>
</dbReference>
<dbReference type="GO" id="GO:0031030">
    <property type="term" value="P:negative regulation of septation initiation signaling"/>
    <property type="evidence" value="ECO:0000315"/>
    <property type="project" value="PomBase"/>
</dbReference>
<dbReference type="GO" id="GO:0009966">
    <property type="term" value="P:regulation of signal transduction"/>
    <property type="evidence" value="ECO:0000318"/>
    <property type="project" value="GO_Central"/>
</dbReference>
<dbReference type="Gene3D" id="1.20.5.300">
    <property type="match status" value="1"/>
</dbReference>
<dbReference type="Gene3D" id="2.130.10.10">
    <property type="entry name" value="YVTN repeat-like/Quinoprotein amine dehydrogenase"/>
    <property type="match status" value="1"/>
</dbReference>
<dbReference type="InterPro" id="IPR013258">
    <property type="entry name" value="Striatin_N"/>
</dbReference>
<dbReference type="InterPro" id="IPR015943">
    <property type="entry name" value="WD40/YVTN_repeat-like_dom_sf"/>
</dbReference>
<dbReference type="InterPro" id="IPR036322">
    <property type="entry name" value="WD40_repeat_dom_sf"/>
</dbReference>
<dbReference type="InterPro" id="IPR001680">
    <property type="entry name" value="WD40_rpt"/>
</dbReference>
<dbReference type="InterPro" id="IPR051488">
    <property type="entry name" value="WD_repeat_striatin"/>
</dbReference>
<dbReference type="PANTHER" id="PTHR15653:SF0">
    <property type="entry name" value="CONNECTOR OF KINASE TO AP-1, ISOFORM E"/>
    <property type="match status" value="1"/>
</dbReference>
<dbReference type="PANTHER" id="PTHR15653">
    <property type="entry name" value="STRIATIN"/>
    <property type="match status" value="1"/>
</dbReference>
<dbReference type="Pfam" id="PF08232">
    <property type="entry name" value="Striatin"/>
    <property type="match status" value="1"/>
</dbReference>
<dbReference type="Pfam" id="PF00400">
    <property type="entry name" value="WD40"/>
    <property type="match status" value="1"/>
</dbReference>
<dbReference type="SMART" id="SM00320">
    <property type="entry name" value="WD40"/>
    <property type="match status" value="5"/>
</dbReference>
<dbReference type="SUPFAM" id="SSF50978">
    <property type="entry name" value="WD40 repeat-like"/>
    <property type="match status" value="1"/>
</dbReference>
<dbReference type="PROSITE" id="PS50082">
    <property type="entry name" value="WD_REPEATS_2"/>
    <property type="match status" value="1"/>
</dbReference>
<dbReference type="PROSITE" id="PS50294">
    <property type="entry name" value="WD_REPEATS_REGION"/>
    <property type="match status" value="1"/>
</dbReference>
<name>YGD1_SCHPO</name>
<keyword id="KW-0175">Coiled coil</keyword>
<keyword id="KW-0963">Cytoplasm</keyword>
<keyword id="KW-1185">Reference proteome</keyword>
<keyword id="KW-0677">Repeat</keyword>
<keyword id="KW-0853">WD repeat</keyword>
<comment type="subcellular location">
    <subcellularLocation>
        <location evidence="3">Cytoplasm</location>
    </subcellularLocation>
</comment>
<proteinExistence type="predicted"/>
<evidence type="ECO:0000255" key="1"/>
<evidence type="ECO:0000256" key="2">
    <source>
        <dbReference type="SAM" id="MobiDB-lite"/>
    </source>
</evidence>
<evidence type="ECO:0000269" key="3">
    <source>
    </source>
</evidence>
<gene>
    <name type="ORF">SPBC1773.01</name>
</gene>
<sequence>MKSNLSLKRQDEKRADKEPNLYTLQGVIQYLQYEAFKNERDHNLWEIERAELKIRVAQLERERAKLEQSLSFQQRRAEMLEKSLRELRKDKNISVKDLDEFHLLDKPAANNTKADAEACLLKSKNYIKKSLQEIVYLTNMQPNVSWNVLQEPTRGIKVPKESNNTQQNNQFVMEPSQNKGNVNDANFFEVEYARNENMNKLSSSELISDDLLEDEIMKPLSSGESLPKKEEEVTKSPSFTLDDSVASNEQTLAQLNIESPVDQKKSKAKKKKEQKWTLKFESDKGTSTQCITHQPLPGSTPSFASGTENGVINVWRLDEDSNDNSMGIIKPHLTFYGHEGPVLCVCVPKATHHIFSGGHDGTIRCWSLPANQTSDSISKILTGSTIFQGHEDCVWELFCHEVKDNNPILLSLSSDGTVRGWKYTGEQLFKIRCDSKQPLSMSVTDSRIAIAYNDGNVRFYDLDTQILVSQMRIAGNSAIGNPAVKDRINKIVWKNGNPDRLYSLHENGMVRVFDVKSEELLAEKSISKVSLTGIAFAVNRPEFAISASDGRVFFLRQDDKLSTLESLPSREAQEEITDLSDILWINSPVDKLEHLIVGCKERISVYDRKYLP</sequence>
<protein>
    <recommendedName>
        <fullName>Uncharacterized WD repeat-containing protein C1773.01</fullName>
    </recommendedName>
</protein>
<accession>O94560</accession>
<feature type="chain" id="PRO_0000316558" description="Uncharacterized WD repeat-containing protein C1773.01">
    <location>
        <begin position="1"/>
        <end position="612"/>
    </location>
</feature>
<feature type="repeat" description="WD 1">
    <location>
        <begin position="286"/>
        <end position="325"/>
    </location>
</feature>
<feature type="repeat" description="WD 2">
    <location>
        <begin position="337"/>
        <end position="376"/>
    </location>
</feature>
<feature type="repeat" description="WD 3">
    <location>
        <begin position="389"/>
        <end position="432"/>
    </location>
</feature>
<feature type="repeat" description="WD 4">
    <location>
        <begin position="434"/>
        <end position="470"/>
    </location>
</feature>
<feature type="repeat" description="WD 5">
    <location>
        <begin position="483"/>
        <end position="523"/>
    </location>
</feature>
<feature type="repeat" description="WD 6">
    <location>
        <begin position="526"/>
        <end position="565"/>
    </location>
</feature>
<feature type="repeat" description="WD 7">
    <location>
        <begin position="574"/>
        <end position="612"/>
    </location>
</feature>
<feature type="region of interest" description="Disordered" evidence="2">
    <location>
        <begin position="219"/>
        <end position="241"/>
    </location>
</feature>
<feature type="coiled-coil region" evidence="1">
    <location>
        <begin position="39"/>
        <end position="100"/>
    </location>
</feature>
<reference key="1">
    <citation type="journal article" date="2002" name="Nature">
        <title>The genome sequence of Schizosaccharomyces pombe.</title>
        <authorList>
            <person name="Wood V."/>
            <person name="Gwilliam R."/>
            <person name="Rajandream M.A."/>
            <person name="Lyne M.H."/>
            <person name="Lyne R."/>
            <person name="Stewart A."/>
            <person name="Sgouros J.G."/>
            <person name="Peat N."/>
            <person name="Hayles J."/>
            <person name="Baker S.G."/>
            <person name="Basham D."/>
            <person name="Bowman S."/>
            <person name="Brooks K."/>
            <person name="Brown D."/>
            <person name="Brown S."/>
            <person name="Chillingworth T."/>
            <person name="Churcher C.M."/>
            <person name="Collins M."/>
            <person name="Connor R."/>
            <person name="Cronin A."/>
            <person name="Davis P."/>
            <person name="Feltwell T."/>
            <person name="Fraser A."/>
            <person name="Gentles S."/>
            <person name="Goble A."/>
            <person name="Hamlin N."/>
            <person name="Harris D.E."/>
            <person name="Hidalgo J."/>
            <person name="Hodgson G."/>
            <person name="Holroyd S."/>
            <person name="Hornsby T."/>
            <person name="Howarth S."/>
            <person name="Huckle E.J."/>
            <person name="Hunt S."/>
            <person name="Jagels K."/>
            <person name="James K.D."/>
            <person name="Jones L."/>
            <person name="Jones M."/>
            <person name="Leather S."/>
            <person name="McDonald S."/>
            <person name="McLean J."/>
            <person name="Mooney P."/>
            <person name="Moule S."/>
            <person name="Mungall K.L."/>
            <person name="Murphy L.D."/>
            <person name="Niblett D."/>
            <person name="Odell C."/>
            <person name="Oliver K."/>
            <person name="O'Neil S."/>
            <person name="Pearson D."/>
            <person name="Quail M.A."/>
            <person name="Rabbinowitsch E."/>
            <person name="Rutherford K.M."/>
            <person name="Rutter S."/>
            <person name="Saunders D."/>
            <person name="Seeger K."/>
            <person name="Sharp S."/>
            <person name="Skelton J."/>
            <person name="Simmonds M.N."/>
            <person name="Squares R."/>
            <person name="Squares S."/>
            <person name="Stevens K."/>
            <person name="Taylor K."/>
            <person name="Taylor R.G."/>
            <person name="Tivey A."/>
            <person name="Walsh S.V."/>
            <person name="Warren T."/>
            <person name="Whitehead S."/>
            <person name="Woodward J.R."/>
            <person name="Volckaert G."/>
            <person name="Aert R."/>
            <person name="Robben J."/>
            <person name="Grymonprez B."/>
            <person name="Weltjens I."/>
            <person name="Vanstreels E."/>
            <person name="Rieger M."/>
            <person name="Schaefer M."/>
            <person name="Mueller-Auer S."/>
            <person name="Gabel C."/>
            <person name="Fuchs M."/>
            <person name="Duesterhoeft A."/>
            <person name="Fritzc C."/>
            <person name="Holzer E."/>
            <person name="Moestl D."/>
            <person name="Hilbert H."/>
            <person name="Borzym K."/>
            <person name="Langer I."/>
            <person name="Beck A."/>
            <person name="Lehrach H."/>
            <person name="Reinhardt R."/>
            <person name="Pohl T.M."/>
            <person name="Eger P."/>
            <person name="Zimmermann W."/>
            <person name="Wedler H."/>
            <person name="Wambutt R."/>
            <person name="Purnelle B."/>
            <person name="Goffeau A."/>
            <person name="Cadieu E."/>
            <person name="Dreano S."/>
            <person name="Gloux S."/>
            <person name="Lelaure V."/>
            <person name="Mottier S."/>
            <person name="Galibert F."/>
            <person name="Aves S.J."/>
            <person name="Xiang Z."/>
            <person name="Hunt C."/>
            <person name="Moore K."/>
            <person name="Hurst S.M."/>
            <person name="Lucas M."/>
            <person name="Rochet M."/>
            <person name="Gaillardin C."/>
            <person name="Tallada V.A."/>
            <person name="Garzon A."/>
            <person name="Thode G."/>
            <person name="Daga R.R."/>
            <person name="Cruzado L."/>
            <person name="Jimenez J."/>
            <person name="Sanchez M."/>
            <person name="del Rey F."/>
            <person name="Benito J."/>
            <person name="Dominguez A."/>
            <person name="Revuelta J.L."/>
            <person name="Moreno S."/>
            <person name="Armstrong J."/>
            <person name="Forsburg S.L."/>
            <person name="Cerutti L."/>
            <person name="Lowe T."/>
            <person name="McCombie W.R."/>
            <person name="Paulsen I."/>
            <person name="Potashkin J."/>
            <person name="Shpakovski G.V."/>
            <person name="Ussery D."/>
            <person name="Barrell B.G."/>
            <person name="Nurse P."/>
        </authorList>
    </citation>
    <scope>NUCLEOTIDE SEQUENCE [LARGE SCALE GENOMIC DNA]</scope>
    <source>
        <strain>972 / ATCC 24843</strain>
    </source>
</reference>
<reference key="2">
    <citation type="journal article" date="2006" name="Nat. Biotechnol.">
        <title>ORFeome cloning and global analysis of protein localization in the fission yeast Schizosaccharomyces pombe.</title>
        <authorList>
            <person name="Matsuyama A."/>
            <person name="Arai R."/>
            <person name="Yashiroda Y."/>
            <person name="Shirai A."/>
            <person name="Kamata A."/>
            <person name="Sekido S."/>
            <person name="Kobayashi Y."/>
            <person name="Hashimoto A."/>
            <person name="Hamamoto M."/>
            <person name="Hiraoka Y."/>
            <person name="Horinouchi S."/>
            <person name="Yoshida M."/>
        </authorList>
    </citation>
    <scope>SUBCELLULAR LOCATION [LARGE SCALE ANALYSIS]</scope>
</reference>